<name>P2Y12_HUMAN</name>
<feature type="chain" id="PRO_0000070036" description="P2Y purinoceptor 12">
    <location>
        <begin position="1"/>
        <end position="342"/>
    </location>
</feature>
<feature type="topological domain" description="Extracellular">
    <location>
        <begin position="1"/>
        <end position="27"/>
    </location>
</feature>
<feature type="transmembrane region" description="Helical; Name=1">
    <location>
        <begin position="28"/>
        <end position="50"/>
    </location>
</feature>
<feature type="topological domain" description="Cytoplasmic">
    <location>
        <begin position="51"/>
        <end position="61"/>
    </location>
</feature>
<feature type="transmembrane region" description="Helical; Name=2">
    <location>
        <begin position="62"/>
        <end position="82"/>
    </location>
</feature>
<feature type="topological domain" description="Extracellular">
    <location>
        <begin position="83"/>
        <end position="97"/>
    </location>
</feature>
<feature type="transmembrane region" description="Helical; Name=3">
    <location>
        <begin position="98"/>
        <end position="118"/>
    </location>
</feature>
<feature type="topological domain" description="Cytoplasmic">
    <location>
        <begin position="119"/>
        <end position="142"/>
    </location>
</feature>
<feature type="transmembrane region" description="Helical; Name=4">
    <location>
        <begin position="143"/>
        <end position="162"/>
    </location>
</feature>
<feature type="topological domain" description="Extracellular">
    <location>
        <begin position="163"/>
        <end position="185"/>
    </location>
</feature>
<feature type="transmembrane region" description="Helical; Name=5">
    <location>
        <begin position="186"/>
        <end position="207"/>
    </location>
</feature>
<feature type="topological domain" description="Cytoplasmic">
    <location>
        <begin position="208"/>
        <end position="233"/>
    </location>
</feature>
<feature type="transmembrane region" description="Helical; Name=6">
    <location>
        <begin position="234"/>
        <end position="259"/>
    </location>
</feature>
<feature type="topological domain" description="Extracellular">
    <location>
        <begin position="260"/>
        <end position="278"/>
    </location>
</feature>
<feature type="transmembrane region" description="Helical; Name=7">
    <location>
        <begin position="279"/>
        <end position="298"/>
    </location>
</feature>
<feature type="topological domain" description="Cytoplasmic">
    <location>
        <begin position="299"/>
        <end position="342"/>
    </location>
</feature>
<feature type="region of interest" description="Disordered" evidence="4">
    <location>
        <begin position="319"/>
        <end position="342"/>
    </location>
</feature>
<feature type="compositionally biased region" description="Acidic residues" evidence="4">
    <location>
        <begin position="333"/>
        <end position="342"/>
    </location>
</feature>
<feature type="binding site">
    <location>
        <position position="93"/>
    </location>
    <ligand>
        <name>ADP</name>
        <dbReference type="ChEBI" id="CHEBI:456216"/>
    </ligand>
</feature>
<feature type="binding site">
    <location>
        <position position="97"/>
    </location>
    <ligand>
        <name>ADP</name>
        <dbReference type="ChEBI" id="CHEBI:456216"/>
    </ligand>
</feature>
<feature type="binding site">
    <location>
        <position position="105"/>
    </location>
    <ligand>
        <name>ADP</name>
        <dbReference type="ChEBI" id="CHEBI:456216"/>
    </ligand>
</feature>
<feature type="binding site">
    <location>
        <begin position="156"/>
        <end position="159"/>
    </location>
    <ligand>
        <name>ADP</name>
        <dbReference type="ChEBI" id="CHEBI:456216"/>
    </ligand>
</feature>
<feature type="binding site">
    <location>
        <begin position="175"/>
        <end position="179"/>
    </location>
    <ligand>
        <name>ADP</name>
        <dbReference type="ChEBI" id="CHEBI:456216"/>
    </ligand>
</feature>
<feature type="binding site">
    <location>
        <position position="187"/>
    </location>
    <ligand>
        <name>ADP</name>
        <dbReference type="ChEBI" id="CHEBI:456216"/>
    </ligand>
</feature>
<feature type="binding site">
    <location>
        <position position="191"/>
    </location>
    <ligand>
        <name>ADP</name>
        <dbReference type="ChEBI" id="CHEBI:456216"/>
    </ligand>
</feature>
<feature type="binding site">
    <location>
        <begin position="256"/>
        <end position="259"/>
    </location>
    <ligand>
        <name>ADP</name>
        <dbReference type="ChEBI" id="CHEBI:456216"/>
    </ligand>
</feature>
<feature type="binding site">
    <location>
        <position position="263"/>
    </location>
    <ligand>
        <name>ADP</name>
        <dbReference type="ChEBI" id="CHEBI:456216"/>
    </ligand>
</feature>
<feature type="binding site">
    <location>
        <position position="280"/>
    </location>
    <ligand>
        <name>ADP</name>
        <dbReference type="ChEBI" id="CHEBI:456216"/>
    </ligand>
</feature>
<feature type="modified residue" description="Phosphoserine" evidence="1">
    <location>
        <position position="55"/>
    </location>
</feature>
<feature type="modified residue" description="Phosphoserine" evidence="1">
    <location>
        <position position="57"/>
    </location>
</feature>
<feature type="glycosylation site" description="N-linked (GlcNAc...) asparagine" evidence="2">
    <location>
        <position position="6"/>
    </location>
</feature>
<feature type="glycosylation site" description="N-linked (GlcNAc...) asparagine" evidence="2">
    <location>
        <position position="13"/>
    </location>
</feature>
<feature type="disulfide bond">
    <location>
        <begin position="17"/>
        <end position="270"/>
    </location>
</feature>
<feature type="disulfide bond">
    <location>
        <begin position="97"/>
        <end position="175"/>
    </location>
</feature>
<feature type="sequence variant" id="VAR_072802" description="In BDPLT8; dbSNP:rs923308300." evidence="11">
    <original>H</original>
    <variation>Q</variation>
    <location>
        <position position="187"/>
    </location>
</feature>
<feature type="sequence variant" id="VAR_025383" description="In BDPLT8; dbSNP:rs121917885." evidence="8">
    <original>R</original>
    <variation>Q</variation>
    <location>
        <position position="256"/>
    </location>
</feature>
<feature type="sequence variant" id="VAR_025384" description="In BDPLT8; dbSNP:rs121917886." evidence="8">
    <original>R</original>
    <variation>W</variation>
    <location>
        <position position="265"/>
    </location>
</feature>
<feature type="sequence variant" id="VAR_049431" description="In dbSNP:rs16846673.">
    <original>E</original>
    <variation>G</variation>
    <location>
        <position position="330"/>
    </location>
</feature>
<feature type="mutagenesis site" description="Abolishes ADP binding." evidence="9">
    <original>K</original>
    <variation>A</variation>
    <location>
        <position position="80"/>
    </location>
</feature>
<feature type="mutagenesis site" description="No effect on ADP binding." evidence="10">
    <original>S</original>
    <variation>A</variation>
    <location>
        <position position="83"/>
    </location>
</feature>
<feature type="mutagenesis site" description="Abolishes ADP binding." evidence="10">
    <original>C</original>
    <variation>A</variation>
    <location>
        <position position="97"/>
    </location>
</feature>
<feature type="mutagenesis site" description="Slightly decreases affinity for ADP." evidence="9">
    <original>S</original>
    <variation>A</variation>
    <location>
        <position position="156"/>
    </location>
</feature>
<feature type="mutagenesis site" description="Slightly decreases affinity for ADP." evidence="9">
    <original>N</original>
    <variation>A</variation>
    <location>
        <position position="159"/>
    </location>
</feature>
<feature type="mutagenesis site" description="Abolishes ADP binding." evidence="10">
    <original>C</original>
    <variation>A</variation>
    <location>
        <position position="175"/>
    </location>
</feature>
<feature type="mutagenesis site" description="Decreases affinity for ADP." evidence="10">
    <original>R</original>
    <variation>A</variation>
    <location>
        <position position="256"/>
    </location>
</feature>
<feature type="mutagenesis site" description="Abolishes ADP binding." evidence="9 10">
    <original>K</original>
    <variation>A</variation>
    <location>
        <position position="280"/>
    </location>
</feature>
<feature type="mutagenesis site" description="Abolishes ADP binding." evidence="9">
    <original>E</original>
    <variation>A</variation>
    <location>
        <position position="281"/>
    </location>
</feature>
<feature type="helix" evidence="12">
    <location>
        <begin position="24"/>
        <end position="50"/>
    </location>
</feature>
<feature type="helix" evidence="12">
    <location>
        <begin position="58"/>
        <end position="74"/>
    </location>
</feature>
<feature type="helix" evidence="12">
    <location>
        <begin position="77"/>
        <end position="85"/>
    </location>
</feature>
<feature type="strand" evidence="12">
    <location>
        <begin position="86"/>
        <end position="88"/>
    </location>
</feature>
<feature type="helix" evidence="12">
    <location>
        <begin position="91"/>
        <end position="98"/>
    </location>
</feature>
<feature type="helix" evidence="12">
    <location>
        <begin position="100"/>
        <end position="127"/>
    </location>
</feature>
<feature type="helix" evidence="12">
    <location>
        <begin position="136"/>
        <end position="161"/>
    </location>
</feature>
<feature type="helix" evidence="12">
    <location>
        <begin position="175"/>
        <end position="178"/>
    </location>
</feature>
<feature type="helix" evidence="12">
    <location>
        <begin position="181"/>
        <end position="226"/>
    </location>
</feature>
<feature type="helix" evidence="12">
    <location>
        <begin position="231"/>
        <end position="233"/>
    </location>
</feature>
<feature type="helix" evidence="12">
    <location>
        <begin position="236"/>
        <end position="248"/>
    </location>
</feature>
<feature type="helix" evidence="12">
    <location>
        <begin position="250"/>
        <end position="264"/>
    </location>
</feature>
<feature type="helix" evidence="12">
    <location>
        <begin position="270"/>
        <end position="293"/>
    </location>
</feature>
<feature type="helix" evidence="12">
    <location>
        <begin position="296"/>
        <end position="299"/>
    </location>
</feature>
<feature type="turn" evidence="12">
    <location>
        <begin position="302"/>
        <end position="304"/>
    </location>
</feature>
<sequence length="342" mass="39439">MQAVDNLTSAPGNTSLCTRDYKITQVLFPLLYTVLFFVGLITNGLAMRIFFQIRSKSNFIIFLKNTVISDLLMILTFPFKILSDAKLGTGPLRTFVCQVTSVIFYFTMYISISFLGLITIDRYQKTTRPFKTSNPKNLLGAKILSVVIWAFMFLLSLPNMILTNRQPRDKNVKKCSFLKSEFGLVWHEIVNYICQVIFWINFLIVIVCYTLITKELYRSYVRTRGVGKVPRKKVNVKVFIIIAVFFICFVPFHFARIPYTLSQTRDVFDCTAENTLFYVKESTLWLTSLNACLDPFIYFFLCKSFRNSLISMLKCPNSATSLSQDNRKKEQDGGDPNEETPM</sequence>
<protein>
    <recommendedName>
        <fullName>P2Y purinoceptor 12</fullName>
        <shortName>P2Y12</shortName>
    </recommendedName>
    <alternativeName>
        <fullName>ADP-glucose receptor</fullName>
        <shortName>ADPG-R</shortName>
    </alternativeName>
    <alternativeName>
        <fullName>P2T(AC)</fullName>
    </alternativeName>
    <alternativeName>
        <fullName>P2Y(AC)</fullName>
    </alternativeName>
    <alternativeName>
        <fullName>P2Y(cyc)</fullName>
    </alternativeName>
    <alternativeName>
        <fullName>P2Y12 platelet ADP receptor</fullName>
        <shortName>P2Y(ADP)</shortName>
    </alternativeName>
    <alternativeName>
        <fullName>SP1999</fullName>
    </alternativeName>
</protein>
<dbReference type="EMBL" id="AF313449">
    <property type="protein sequence ID" value="AAG48944.1"/>
    <property type="molecule type" value="mRNA"/>
</dbReference>
<dbReference type="EMBL" id="AF321815">
    <property type="protein sequence ID" value="AAK00948.1"/>
    <property type="molecule type" value="mRNA"/>
</dbReference>
<dbReference type="EMBL" id="AB052684">
    <property type="protein sequence ID" value="BAB60824.1"/>
    <property type="molecule type" value="mRNA"/>
</dbReference>
<dbReference type="EMBL" id="AF310685">
    <property type="protein sequence ID" value="AAL32292.1"/>
    <property type="molecule type" value="Genomic_DNA"/>
</dbReference>
<dbReference type="EMBL" id="AJ320495">
    <property type="protein sequence ID" value="CAC87144.1"/>
    <property type="molecule type" value="mRNA"/>
</dbReference>
<dbReference type="EMBL" id="AB083596">
    <property type="protein sequence ID" value="BAB89309.1"/>
    <property type="molecule type" value="Genomic_DNA"/>
</dbReference>
<dbReference type="EMBL" id="AY136754">
    <property type="protein sequence ID" value="AAN01280.1"/>
    <property type="molecule type" value="mRNA"/>
</dbReference>
<dbReference type="EMBL" id="CH471052">
    <property type="protein sequence ID" value="EAW78803.1"/>
    <property type="molecule type" value="Genomic_DNA"/>
</dbReference>
<dbReference type="EMBL" id="CH471052">
    <property type="protein sequence ID" value="EAW78804.1"/>
    <property type="molecule type" value="Genomic_DNA"/>
</dbReference>
<dbReference type="EMBL" id="BC017898">
    <property type="protein sequence ID" value="AAH17898.1"/>
    <property type="molecule type" value="mRNA"/>
</dbReference>
<dbReference type="CCDS" id="CCDS3159.1"/>
<dbReference type="RefSeq" id="NP_073625.1">
    <property type="nucleotide sequence ID" value="NM_022788.5"/>
</dbReference>
<dbReference type="RefSeq" id="NP_795345.1">
    <property type="nucleotide sequence ID" value="NM_176876.3"/>
</dbReference>
<dbReference type="RefSeq" id="XP_016862558.1">
    <property type="nucleotide sequence ID" value="XM_017007069.1"/>
</dbReference>
<dbReference type="PDB" id="4NTJ">
    <property type="method" value="X-ray"/>
    <property type="resolution" value="2.62 A"/>
    <property type="chains" value="A=2-342"/>
</dbReference>
<dbReference type="PDB" id="4PXZ">
    <property type="method" value="X-ray"/>
    <property type="resolution" value="2.50 A"/>
    <property type="chains" value="A=2-342"/>
</dbReference>
<dbReference type="PDB" id="4PY0">
    <property type="method" value="X-ray"/>
    <property type="resolution" value="3.10 A"/>
    <property type="chains" value="A=2-342"/>
</dbReference>
<dbReference type="PDB" id="7PP1">
    <property type="method" value="X-ray"/>
    <property type="resolution" value="2.78 A"/>
    <property type="chains" value="AAA=2-342"/>
</dbReference>
<dbReference type="PDB" id="7XXI">
    <property type="method" value="EM"/>
    <property type="resolution" value="3.00 A"/>
    <property type="chains" value="A=2-342"/>
</dbReference>
<dbReference type="PDBsum" id="4NTJ"/>
<dbReference type="PDBsum" id="4PXZ"/>
<dbReference type="PDBsum" id="4PY0"/>
<dbReference type="PDBsum" id="7PP1"/>
<dbReference type="PDBsum" id="7XXI"/>
<dbReference type="EMDB" id="EMD-33504"/>
<dbReference type="SMR" id="Q9H244"/>
<dbReference type="BioGRID" id="122309">
    <property type="interactions" value="69"/>
</dbReference>
<dbReference type="CORUM" id="Q9H244"/>
<dbReference type="DIP" id="DIP-61226N"/>
<dbReference type="FunCoup" id="Q9H244">
    <property type="interactions" value="484"/>
</dbReference>
<dbReference type="IntAct" id="Q9H244">
    <property type="interactions" value="47"/>
</dbReference>
<dbReference type="STRING" id="9606.ENSP00000307259"/>
<dbReference type="BindingDB" id="Q9H244"/>
<dbReference type="ChEMBL" id="CHEMBL2001"/>
<dbReference type="DrugBank" id="DB16833">
    <property type="generic name" value="Adenosine disphosphate"/>
</dbReference>
<dbReference type="DrugBank" id="DB06441">
    <property type="generic name" value="Cangrelor"/>
</dbReference>
<dbReference type="DrugBank" id="DB00758">
    <property type="generic name" value="Clopidogrel"/>
</dbReference>
<dbReference type="DrugBank" id="DB06350">
    <property type="generic name" value="Elinogrel"/>
</dbReference>
<dbReference type="DrugBank" id="DB01240">
    <property type="generic name" value="Epoprostenol"/>
</dbReference>
<dbReference type="DrugBank" id="DB06209">
    <property type="generic name" value="Prasugrel"/>
</dbReference>
<dbReference type="DrugBank" id="DB01069">
    <property type="generic name" value="Promethazine"/>
</dbReference>
<dbReference type="DrugBank" id="DB05553">
    <property type="generic name" value="Regrelor"/>
</dbReference>
<dbReference type="DrugBank" id="DB15163">
    <property type="generic name" value="Selatogrel"/>
</dbReference>
<dbReference type="DrugBank" id="DB08816">
    <property type="generic name" value="Ticagrelor"/>
</dbReference>
<dbReference type="DrugBank" id="DB00208">
    <property type="generic name" value="Ticlopidine"/>
</dbReference>
<dbReference type="DrugBank" id="DB00374">
    <property type="generic name" value="Treprostinil"/>
</dbReference>
<dbReference type="DrugBank" id="DB16349">
    <property type="generic name" value="Vicagrel"/>
</dbReference>
<dbReference type="DrugCentral" id="Q9H244"/>
<dbReference type="GuidetoPHARMACOLOGY" id="328"/>
<dbReference type="TCDB" id="9.A.14.13.31">
    <property type="family name" value="the g-protein-coupled receptor (gpcr) family"/>
</dbReference>
<dbReference type="GlyCosmos" id="Q9H244">
    <property type="glycosylation" value="2 sites, No reported glycans"/>
</dbReference>
<dbReference type="GlyGen" id="Q9H244">
    <property type="glycosylation" value="3 sites, 1 O-linked glycan (1 site)"/>
</dbReference>
<dbReference type="iPTMnet" id="Q9H244"/>
<dbReference type="PhosphoSitePlus" id="Q9H244"/>
<dbReference type="BioMuta" id="P2RY12"/>
<dbReference type="DMDM" id="21263835"/>
<dbReference type="MassIVE" id="Q9H244"/>
<dbReference type="PaxDb" id="9606-ENSP00000307259"/>
<dbReference type="PeptideAtlas" id="Q9H244"/>
<dbReference type="ProteomicsDB" id="80487"/>
<dbReference type="Antibodypedia" id="2951">
    <property type="antibodies" value="222 antibodies from 32 providers"/>
</dbReference>
<dbReference type="DNASU" id="64805"/>
<dbReference type="Ensembl" id="ENST00000302632.4">
    <property type="protein sequence ID" value="ENSP00000307259.4"/>
    <property type="gene ID" value="ENSG00000169313.10"/>
</dbReference>
<dbReference type="GeneID" id="64805"/>
<dbReference type="KEGG" id="hsa:64805"/>
<dbReference type="MANE-Select" id="ENST00000302632.4">
    <property type="protein sequence ID" value="ENSP00000307259.4"/>
    <property type="RefSeq nucleotide sequence ID" value="NM_022788.5"/>
    <property type="RefSeq protein sequence ID" value="NP_073625.1"/>
</dbReference>
<dbReference type="UCSC" id="uc003eyx.3">
    <property type="organism name" value="human"/>
</dbReference>
<dbReference type="AGR" id="HGNC:18124"/>
<dbReference type="CTD" id="64805"/>
<dbReference type="DisGeNET" id="64805"/>
<dbReference type="GeneCards" id="P2RY12"/>
<dbReference type="HGNC" id="HGNC:18124">
    <property type="gene designation" value="P2RY12"/>
</dbReference>
<dbReference type="HPA" id="ENSG00000169313">
    <property type="expression patterns" value="Tissue enriched (brain)"/>
</dbReference>
<dbReference type="MalaCards" id="P2RY12"/>
<dbReference type="MIM" id="600515">
    <property type="type" value="gene"/>
</dbReference>
<dbReference type="MIM" id="609821">
    <property type="type" value="phenotype"/>
</dbReference>
<dbReference type="neXtProt" id="NX_Q9H244"/>
<dbReference type="OpenTargets" id="ENSG00000169313"/>
<dbReference type="Orphanet" id="36355">
    <property type="disease" value="Bleeding disorder due to P2Y12 defect"/>
</dbReference>
<dbReference type="PharmGKB" id="PA134971947"/>
<dbReference type="VEuPathDB" id="HostDB:ENSG00000169313"/>
<dbReference type="eggNOG" id="ENOG502QUS2">
    <property type="taxonomic scope" value="Eukaryota"/>
</dbReference>
<dbReference type="GeneTree" id="ENSGT01110000267167"/>
<dbReference type="HOGENOM" id="CLU_009579_8_2_1"/>
<dbReference type="InParanoid" id="Q9H244"/>
<dbReference type="OMA" id="FVCQVTQ"/>
<dbReference type="OrthoDB" id="6163051at2759"/>
<dbReference type="PAN-GO" id="Q9H244">
    <property type="GO annotations" value="2 GO annotations based on evolutionary models"/>
</dbReference>
<dbReference type="PhylomeDB" id="Q9H244"/>
<dbReference type="TreeFam" id="TF330969"/>
<dbReference type="PathwayCommons" id="Q9H244"/>
<dbReference type="Reactome" id="R-HSA-392170">
    <property type="pathway name" value="ADP signalling through P2Y purinoceptor 12"/>
</dbReference>
<dbReference type="Reactome" id="R-HSA-417957">
    <property type="pathway name" value="P2Y receptors"/>
</dbReference>
<dbReference type="Reactome" id="R-HSA-418594">
    <property type="pathway name" value="G alpha (i) signalling events"/>
</dbReference>
<dbReference type="SignaLink" id="Q9H244"/>
<dbReference type="SIGNOR" id="Q9H244"/>
<dbReference type="BioGRID-ORCS" id="64805">
    <property type="hits" value="8 hits in 1154 CRISPR screens"/>
</dbReference>
<dbReference type="CD-CODE" id="6F24707C">
    <property type="entry name" value="Cajal body"/>
</dbReference>
<dbReference type="CD-CODE" id="804901D1">
    <property type="entry name" value="Nuclear speckle"/>
</dbReference>
<dbReference type="ChiTaRS" id="P2RY12">
    <property type="organism name" value="human"/>
</dbReference>
<dbReference type="EvolutionaryTrace" id="Q9H244"/>
<dbReference type="GeneWiki" id="P2Y12"/>
<dbReference type="GenomeRNAi" id="64805"/>
<dbReference type="Pharos" id="Q9H244">
    <property type="development level" value="Tclin"/>
</dbReference>
<dbReference type="PRO" id="PR:Q9H244"/>
<dbReference type="Proteomes" id="UP000005640">
    <property type="component" value="Chromosome 3"/>
</dbReference>
<dbReference type="RNAct" id="Q9H244">
    <property type="molecule type" value="protein"/>
</dbReference>
<dbReference type="Bgee" id="ENSG00000169313">
    <property type="expression patterns" value="Expressed in inferior vagus X ganglion and 144 other cell types or tissues"/>
</dbReference>
<dbReference type="GO" id="GO:0044298">
    <property type="term" value="C:cell body membrane"/>
    <property type="evidence" value="ECO:0007669"/>
    <property type="project" value="Ensembl"/>
</dbReference>
<dbReference type="GO" id="GO:0031253">
    <property type="term" value="C:cell projection membrane"/>
    <property type="evidence" value="ECO:0007669"/>
    <property type="project" value="Ensembl"/>
</dbReference>
<dbReference type="GO" id="GO:0009986">
    <property type="term" value="C:cell surface"/>
    <property type="evidence" value="ECO:0007005"/>
    <property type="project" value="UniProtKB"/>
</dbReference>
<dbReference type="GO" id="GO:0016020">
    <property type="term" value="C:membrane"/>
    <property type="evidence" value="ECO:0000314"/>
    <property type="project" value="UniProtKB"/>
</dbReference>
<dbReference type="GO" id="GO:0005886">
    <property type="term" value="C:plasma membrane"/>
    <property type="evidence" value="ECO:0000250"/>
    <property type="project" value="ParkinsonsUK-UCL"/>
</dbReference>
<dbReference type="GO" id="GO:0001609">
    <property type="term" value="F:G protein-coupled adenosine receptor activity"/>
    <property type="evidence" value="ECO:0007669"/>
    <property type="project" value="Ensembl"/>
</dbReference>
<dbReference type="GO" id="GO:0001621">
    <property type="term" value="F:G protein-coupled ADP receptor activity"/>
    <property type="evidence" value="ECO:0000314"/>
    <property type="project" value="UniProtKB"/>
</dbReference>
<dbReference type="GO" id="GO:0045028">
    <property type="term" value="F:G protein-coupled purinergic nucleotide receptor activity"/>
    <property type="evidence" value="ECO:0000318"/>
    <property type="project" value="GO_Central"/>
</dbReference>
<dbReference type="GO" id="GO:0005085">
    <property type="term" value="F:guanyl-nucleotide exchange factor activity"/>
    <property type="evidence" value="ECO:0000304"/>
    <property type="project" value="Reactome"/>
</dbReference>
<dbReference type="GO" id="GO:0007193">
    <property type="term" value="P:adenylate cyclase-inhibiting G protein-coupled receptor signaling pathway"/>
    <property type="evidence" value="ECO:0000315"/>
    <property type="project" value="UniProtKB"/>
</dbReference>
<dbReference type="GO" id="GO:0019722">
    <property type="term" value="P:calcium-mediated signaling"/>
    <property type="evidence" value="ECO:0000250"/>
    <property type="project" value="ARUK-UCL"/>
</dbReference>
<dbReference type="GO" id="GO:0030030">
    <property type="term" value="P:cell projection organization"/>
    <property type="evidence" value="ECO:0000250"/>
    <property type="project" value="ARUK-UCL"/>
</dbReference>
<dbReference type="GO" id="GO:0071318">
    <property type="term" value="P:cellular response to ATP"/>
    <property type="evidence" value="ECO:0000250"/>
    <property type="project" value="ARUK-UCL"/>
</dbReference>
<dbReference type="GO" id="GO:0021801">
    <property type="term" value="P:cerebral cortex radial glia-guided migration"/>
    <property type="evidence" value="ECO:0000250"/>
    <property type="project" value="ARUK-UCL"/>
</dbReference>
<dbReference type="GO" id="GO:0051649">
    <property type="term" value="P:establishment of localization in cell"/>
    <property type="evidence" value="ECO:0007669"/>
    <property type="project" value="Ensembl"/>
</dbReference>
<dbReference type="GO" id="GO:0007186">
    <property type="term" value="P:G protein-coupled receptor signaling pathway"/>
    <property type="evidence" value="ECO:0000314"/>
    <property type="project" value="UniProtKB"/>
</dbReference>
<dbReference type="GO" id="GO:0007599">
    <property type="term" value="P:hemostasis"/>
    <property type="evidence" value="ECO:0000303"/>
    <property type="project" value="UniProtKB"/>
</dbReference>
<dbReference type="GO" id="GO:0030032">
    <property type="term" value="P:lamellipodium assembly"/>
    <property type="evidence" value="ECO:0000250"/>
    <property type="project" value="ARUK-UCL"/>
</dbReference>
<dbReference type="GO" id="GO:0006811">
    <property type="term" value="P:monoatomic ion transport"/>
    <property type="evidence" value="ECO:0007669"/>
    <property type="project" value="Ensembl"/>
</dbReference>
<dbReference type="GO" id="GO:0007200">
    <property type="term" value="P:phospholipase C-activating G protein-coupled receptor signaling pathway"/>
    <property type="evidence" value="ECO:0000250"/>
    <property type="project" value="ARUK-UCL"/>
</dbReference>
<dbReference type="GO" id="GO:0030168">
    <property type="term" value="P:platelet activation"/>
    <property type="evidence" value="ECO:0000304"/>
    <property type="project" value="Reactome"/>
</dbReference>
<dbReference type="GO" id="GO:0070527">
    <property type="term" value="P:platelet aggregation"/>
    <property type="evidence" value="ECO:0000315"/>
    <property type="project" value="UniProtKB"/>
</dbReference>
<dbReference type="GO" id="GO:0033630">
    <property type="term" value="P:positive regulation of cell adhesion mediated by integrin"/>
    <property type="evidence" value="ECO:0000250"/>
    <property type="project" value="ARUK-UCL"/>
</dbReference>
<dbReference type="GO" id="GO:0050921">
    <property type="term" value="P:positive regulation of chemotaxis"/>
    <property type="evidence" value="ECO:0000250"/>
    <property type="project" value="ARUK-UCL"/>
</dbReference>
<dbReference type="GO" id="GO:0033626">
    <property type="term" value="P:positive regulation of integrin activation by cell surface receptor linked signal transduction"/>
    <property type="evidence" value="ECO:0000250"/>
    <property type="project" value="ARUK-UCL"/>
</dbReference>
<dbReference type="GO" id="GO:1904141">
    <property type="term" value="P:positive regulation of microglial cell migration"/>
    <property type="evidence" value="ECO:0000250"/>
    <property type="project" value="ARUK-UCL"/>
</dbReference>
<dbReference type="GO" id="GO:0043270">
    <property type="term" value="P:positive regulation of monoatomic ion transport"/>
    <property type="evidence" value="ECO:0007669"/>
    <property type="project" value="Ensembl"/>
</dbReference>
<dbReference type="GO" id="GO:0051897">
    <property type="term" value="P:positive regulation of phosphatidylinositol 3-kinase/protein kinase B signal transduction"/>
    <property type="evidence" value="ECO:0000250"/>
    <property type="project" value="ARUK-UCL"/>
</dbReference>
<dbReference type="GO" id="GO:1900029">
    <property type="term" value="P:positive regulation of ruffle assembly"/>
    <property type="evidence" value="ECO:0000250"/>
    <property type="project" value="ARUK-UCL"/>
</dbReference>
<dbReference type="GO" id="GO:0050920">
    <property type="term" value="P:regulation of chemotaxis"/>
    <property type="evidence" value="ECO:0000250"/>
    <property type="project" value="ARUK-UCL"/>
</dbReference>
<dbReference type="GO" id="GO:1904139">
    <property type="term" value="P:regulation of microglial cell migration"/>
    <property type="evidence" value="ECO:0000250"/>
    <property type="project" value="ParkinsonsUK-UCL"/>
</dbReference>
<dbReference type="GO" id="GO:0048678">
    <property type="term" value="P:response to axon injury"/>
    <property type="evidence" value="ECO:0000250"/>
    <property type="project" value="ARUK-UCL"/>
</dbReference>
<dbReference type="GO" id="GO:0006930">
    <property type="term" value="P:substrate-dependent cell migration, cell extension"/>
    <property type="evidence" value="ECO:0000250"/>
    <property type="project" value="ParkinsonsUK-UCL"/>
</dbReference>
<dbReference type="GO" id="GO:0150063">
    <property type="term" value="P:visual system development"/>
    <property type="evidence" value="ECO:0007669"/>
    <property type="project" value="Ensembl"/>
</dbReference>
<dbReference type="CDD" id="cd15150">
    <property type="entry name" value="7tmA_P2Y12"/>
    <property type="match status" value="1"/>
</dbReference>
<dbReference type="FunFam" id="1.20.1070.10:FF:000049">
    <property type="entry name" value="G-protein coupled receptor 87"/>
    <property type="match status" value="1"/>
</dbReference>
<dbReference type="Gene3D" id="1.20.1070.10">
    <property type="entry name" value="Rhodopsin 7-helix transmembrane proteins"/>
    <property type="match status" value="1"/>
</dbReference>
<dbReference type="InterPro" id="IPR000276">
    <property type="entry name" value="GPCR_Rhodpsn"/>
</dbReference>
<dbReference type="InterPro" id="IPR017452">
    <property type="entry name" value="GPCR_Rhodpsn_7TM"/>
</dbReference>
<dbReference type="InterPro" id="IPR005394">
    <property type="entry name" value="P2Y12_rcpt"/>
</dbReference>
<dbReference type="PANTHER" id="PTHR24233:SF0">
    <property type="entry name" value="P2Y PURINOCEPTOR 12"/>
    <property type="match status" value="1"/>
</dbReference>
<dbReference type="PANTHER" id="PTHR24233">
    <property type="entry name" value="P2Y PURINOCEPTOR-RELATED G-PROTEIN COUPLED RECEPTOR"/>
    <property type="match status" value="1"/>
</dbReference>
<dbReference type="Pfam" id="PF00001">
    <property type="entry name" value="7tm_1"/>
    <property type="match status" value="1"/>
</dbReference>
<dbReference type="PRINTS" id="PR00237">
    <property type="entry name" value="GPCRRHODOPSN"/>
</dbReference>
<dbReference type="PRINTS" id="PR01569">
    <property type="entry name" value="P2Y12PRNCPTR"/>
</dbReference>
<dbReference type="PRINTS" id="PR01157">
    <property type="entry name" value="P2YPURNOCPTR"/>
</dbReference>
<dbReference type="SUPFAM" id="SSF81321">
    <property type="entry name" value="Family A G protein-coupled receptor-like"/>
    <property type="match status" value="1"/>
</dbReference>
<dbReference type="PROSITE" id="PS50262">
    <property type="entry name" value="G_PROTEIN_RECEP_F1_2"/>
    <property type="match status" value="1"/>
</dbReference>
<accession>Q9H244</accession>
<accession>D3DNJ5</accession>
<accession>Q546J7</accession>
<keyword id="KW-0002">3D-structure</keyword>
<keyword id="KW-0094">Blood coagulation</keyword>
<keyword id="KW-1003">Cell membrane</keyword>
<keyword id="KW-0225">Disease variant</keyword>
<keyword id="KW-1015">Disulfide bond</keyword>
<keyword id="KW-0297">G-protein coupled receptor</keyword>
<keyword id="KW-0325">Glycoprotein</keyword>
<keyword id="KW-0356">Hemostasis</keyword>
<keyword id="KW-0472">Membrane</keyword>
<keyword id="KW-0597">Phosphoprotein</keyword>
<keyword id="KW-1267">Proteomics identification</keyword>
<keyword id="KW-0675">Receptor</keyword>
<keyword id="KW-1185">Reference proteome</keyword>
<keyword id="KW-0807">Transducer</keyword>
<keyword id="KW-0812">Transmembrane</keyword>
<keyword id="KW-1133">Transmembrane helix</keyword>
<organism>
    <name type="scientific">Homo sapiens</name>
    <name type="common">Human</name>
    <dbReference type="NCBI Taxonomy" id="9606"/>
    <lineage>
        <taxon>Eukaryota</taxon>
        <taxon>Metazoa</taxon>
        <taxon>Chordata</taxon>
        <taxon>Craniata</taxon>
        <taxon>Vertebrata</taxon>
        <taxon>Euteleostomi</taxon>
        <taxon>Mammalia</taxon>
        <taxon>Eutheria</taxon>
        <taxon>Euarchontoglires</taxon>
        <taxon>Primates</taxon>
        <taxon>Haplorrhini</taxon>
        <taxon>Catarrhini</taxon>
        <taxon>Hominidae</taxon>
        <taxon>Homo</taxon>
    </lineage>
</organism>
<evidence type="ECO:0000250" key="1">
    <source>
        <dbReference type="UniProtKB" id="Q9EPX4"/>
    </source>
</evidence>
<evidence type="ECO:0000255" key="2"/>
<evidence type="ECO:0000255" key="3">
    <source>
        <dbReference type="PROSITE-ProRule" id="PRU00521"/>
    </source>
</evidence>
<evidence type="ECO:0000256" key="4">
    <source>
        <dbReference type="SAM" id="MobiDB-lite"/>
    </source>
</evidence>
<evidence type="ECO:0000269" key="5">
    <source>
    </source>
</evidence>
<evidence type="ECO:0000269" key="6">
    <source>
    </source>
</evidence>
<evidence type="ECO:0000269" key="7">
    <source>
    </source>
</evidence>
<evidence type="ECO:0000269" key="8">
    <source>
    </source>
</evidence>
<evidence type="ECO:0000269" key="9">
    <source>
    </source>
</evidence>
<evidence type="ECO:0000269" key="10">
    <source>
    </source>
</evidence>
<evidence type="ECO:0000269" key="11">
    <source>
    </source>
</evidence>
<evidence type="ECO:0007829" key="12">
    <source>
        <dbReference type="PDB" id="4PXZ"/>
    </source>
</evidence>
<reference key="1">
    <citation type="journal article" date="2001" name="Nature">
        <title>Identification of the platelet ADP receptor targeted by antithrombotic drugs.</title>
        <authorList>
            <person name="Hollopeter G."/>
            <person name="Jantzen H.-M."/>
            <person name="Vincent D."/>
            <person name="Li G."/>
            <person name="England L."/>
            <person name="Ramakrishnan V."/>
            <person name="Yang R.-B."/>
            <person name="Nurden P."/>
            <person name="Nurden A."/>
            <person name="Julius D.J."/>
            <person name="Conley P.B."/>
        </authorList>
    </citation>
    <scope>NUCLEOTIDE SEQUENCE [MRNA]</scope>
    <scope>FUNCTION</scope>
    <scope>SUBCELLULAR LOCATION</scope>
    <scope>TISSUE SPECIFICITY</scope>
    <scope>INVOLVEMENT IN BDPLT8</scope>
</reference>
<reference key="2">
    <citation type="journal article" date="2001" name="J. Biol. Chem.">
        <title>ADP is the cognate ligand for the orphan G protein-coupled receptor SP1999.</title>
        <authorList>
            <person name="Zhang F.L."/>
            <person name="Luo L."/>
            <person name="Gustafson E."/>
            <person name="Lachowicz J."/>
            <person name="Smith M."/>
            <person name="Qiao X."/>
            <person name="Liu Y.-H."/>
            <person name="Chen G."/>
            <person name="Pramanik B."/>
            <person name="Laz T.M."/>
            <person name="Palmer K."/>
            <person name="Bayne M."/>
            <person name="Monsma F.J. Jr."/>
        </authorList>
    </citation>
    <scope>NUCLEOTIDE SEQUENCE [MRNA]</scope>
    <scope>FUNCTION</scope>
    <scope>TISSUE SPECIFICITY</scope>
    <source>
        <tissue>Hypothalamus</tissue>
    </source>
</reference>
<reference key="3">
    <citation type="journal article" date="2001" name="Mol. Pharmacol.">
        <title>Molecular cloning of the platelet P2T(AC) ADP receptor: pharmacological comparison with another ADP receptor, the P2Y1 receptor.</title>
        <authorList>
            <person name="Takasaki J."/>
            <person name="Kamohara M."/>
            <person name="Saito T."/>
            <person name="Matsumoto M."/>
            <person name="Matsumoto S."/>
            <person name="Ohishi T."/>
            <person name="Soga T."/>
            <person name="Matsushime H."/>
            <person name="Furuichi K."/>
        </authorList>
    </citation>
    <scope>NUCLEOTIDE SEQUENCE [MRNA]</scope>
    <scope>FUNCTION</scope>
    <scope>TISSUE SPECIFICITY</scope>
    <source>
        <tissue>Brain</tissue>
    </source>
</reference>
<reference key="4">
    <citation type="submission" date="2000-10" db="EMBL/GenBank/DDBJ databases">
        <title>ADP-glucose activates a G-protein coupled receptor and inhibits smooth muscle contractions.</title>
        <authorList>
            <person name="Reinscheid R.K."/>
            <person name="Nothacker H.-P."/>
            <person name="Wang Z."/>
            <person name="Zeng J."/>
            <person name="Ehlert F.J."/>
            <person name="Civelli O."/>
        </authorList>
    </citation>
    <scope>NUCLEOTIDE SEQUENCE [GENOMIC DNA]</scope>
</reference>
<reference key="5">
    <citation type="submission" date="2002-08" db="EMBL/GenBank/DDBJ databases">
        <title>Cloning and characterization of a human platelet ADP-receptor.</title>
        <authorList>
            <person name="Bruess M."/>
            <person name="von Kugelgen I."/>
            <person name="Bonisch H."/>
        </authorList>
    </citation>
    <scope>NUCLEOTIDE SEQUENCE [MRNA]</scope>
    <source>
        <tissue>Blood</tissue>
    </source>
</reference>
<reference key="6">
    <citation type="journal article" date="2002" name="FEBS Lett.">
        <title>Identification of G protein-coupled receptor genes from the human genome sequence.</title>
        <authorList>
            <person name="Takeda S."/>
            <person name="Kadowaki S."/>
            <person name="Haga T."/>
            <person name="Takaesu H."/>
            <person name="Mitaku S."/>
        </authorList>
    </citation>
    <scope>NUCLEOTIDE SEQUENCE [LARGE SCALE GENOMIC DNA]</scope>
</reference>
<reference key="7">
    <citation type="submission" date="2005-09" db="EMBL/GenBank/DDBJ databases">
        <authorList>
            <person name="Mural R.J."/>
            <person name="Istrail S."/>
            <person name="Sutton G.G."/>
            <person name="Florea L."/>
            <person name="Halpern A.L."/>
            <person name="Mobarry C.M."/>
            <person name="Lippert R."/>
            <person name="Walenz B."/>
            <person name="Shatkay H."/>
            <person name="Dew I."/>
            <person name="Miller J.R."/>
            <person name="Flanigan M.J."/>
            <person name="Edwards N.J."/>
            <person name="Bolanos R."/>
            <person name="Fasulo D."/>
            <person name="Halldorsson B.V."/>
            <person name="Hannenhalli S."/>
            <person name="Turner R."/>
            <person name="Yooseph S."/>
            <person name="Lu F."/>
            <person name="Nusskern D.R."/>
            <person name="Shue B.C."/>
            <person name="Zheng X.H."/>
            <person name="Zhong F."/>
            <person name="Delcher A.L."/>
            <person name="Huson D.H."/>
            <person name="Kravitz S.A."/>
            <person name="Mouchard L."/>
            <person name="Reinert K."/>
            <person name="Remington K.A."/>
            <person name="Clark A.G."/>
            <person name="Waterman M.S."/>
            <person name="Eichler E.E."/>
            <person name="Adams M.D."/>
            <person name="Hunkapiller M.W."/>
            <person name="Myers E.W."/>
            <person name="Venter J.C."/>
        </authorList>
    </citation>
    <scope>NUCLEOTIDE SEQUENCE [LARGE SCALE GENOMIC DNA]</scope>
</reference>
<reference key="8">
    <citation type="submission" date="2002-07" db="EMBL/GenBank/DDBJ databases">
        <title>cDNA clones of human proteins involved in signal transduction sequenced by the Guthrie cDNA resource center (www.cdna.org).</title>
        <authorList>
            <person name="Puhl H.L. III"/>
            <person name="Ikeda S.R."/>
            <person name="Aronstam R.S."/>
        </authorList>
    </citation>
    <scope>NUCLEOTIDE SEQUENCE [LARGE SCALE MRNA]</scope>
    <source>
        <tissue>Brain</tissue>
    </source>
</reference>
<reference key="9">
    <citation type="journal article" date="2004" name="Genome Res.">
        <title>The status, quality, and expansion of the NIH full-length cDNA project: the Mammalian Gene Collection (MGC).</title>
        <authorList>
            <consortium name="The MGC Project Team"/>
        </authorList>
    </citation>
    <scope>NUCLEOTIDE SEQUENCE [LARGE SCALE MRNA]</scope>
    <source>
        <tissue>Prostate</tissue>
    </source>
</reference>
<reference key="10">
    <citation type="journal article" date="2014" name="Nature">
        <title>Structure of the human P2Y12 receptor in complex with an antithrombotic drug.</title>
        <authorList>
            <person name="Zhang K."/>
            <person name="Zhang J."/>
            <person name="Gao Z.G."/>
            <person name="Zhang D."/>
            <person name="Zhu L."/>
            <person name="Han G.W."/>
            <person name="Moss S.M."/>
            <person name="Paoletta S."/>
            <person name="Kiselev E."/>
            <person name="Lu W."/>
            <person name="Fenalti G."/>
            <person name="Zhang W."/>
            <person name="Mueller C.E."/>
            <person name="Yang H."/>
            <person name="Jiang H."/>
            <person name="Cherezov V."/>
            <person name="Katritch V."/>
            <person name="Jacobson K.A."/>
            <person name="Stevens R.C."/>
            <person name="Wu B."/>
            <person name="Zhao Q."/>
        </authorList>
    </citation>
    <scope>X-RAY CRYSTALLOGRAPHY (2.62 ANGSTROMS) IN COMPLEX WITH THE AGONIST AZD1283</scope>
    <scope>FUNCTION</scope>
    <scope>DISULFIDE BOND</scope>
    <scope>SUBCELLULAR LOCATION</scope>
    <scope>MUTAGENESIS OF LYS-80; SER-156; ASN-159; LYS-280 AND GLU-281</scope>
</reference>
<reference key="11">
    <citation type="journal article" date="2014" name="Nature">
        <title>Agonist-bound structure of the human P2Y12 receptor.</title>
        <authorList>
            <person name="Zhang J."/>
            <person name="Zhang K."/>
            <person name="Gao Z.G."/>
            <person name="Paoletta S."/>
            <person name="Zhang D."/>
            <person name="Han G.W."/>
            <person name="Li T."/>
            <person name="Ma L."/>
            <person name="Zhang W."/>
            <person name="Mueller C.E."/>
            <person name="Yang H."/>
            <person name="Jiang H."/>
            <person name="Cherezov V."/>
            <person name="Katritch V."/>
            <person name="Jacobson K.A."/>
            <person name="Stevens R.C."/>
            <person name="Wu B."/>
            <person name="Zhao Q."/>
        </authorList>
    </citation>
    <scope>X-RAY CRYSTALLOGRAPHY (2.50 ANGSTROMS) OF 2-342 IN COMPLEX WITH THE ADP ANALOG 2-(METHYLSULFANYL)ADENOSINE 5'-(TRIHYDROGEN DIPHOSPHATE)</scope>
    <scope>FUNCTION</scope>
    <scope>SUBCELLULAR LOCATION</scope>
    <scope>DISULFIDE BOND</scope>
    <scope>MUTAGENESIS OF SER-83; CYS-97; CYS-175; ARG-256 AND LYS-280</scope>
</reference>
<reference key="12">
    <citation type="journal article" date="2003" name="Proc. Natl. Acad. Sci. U.S.A.">
        <title>Molecular bases of defective signal transduction in the platelet P2Y12 receptor of a patient with congenital bleeding.</title>
        <authorList>
            <person name="Cattaneo M."/>
            <person name="Zighetti M.L."/>
            <person name="Lombardi R."/>
            <person name="Martinez C."/>
            <person name="Lecchi A."/>
            <person name="Conley P.B."/>
            <person name="Ware J."/>
            <person name="Ruggeri Z.M."/>
        </authorList>
    </citation>
    <scope>VARIANTS BDPLT8 GLN-256 AND TRP-265</scope>
    <scope>INVOLVEMENT IN BDPLT8</scope>
    <scope>FUNCTION</scope>
    <scope>SUBCELLULAR LOCATION</scope>
</reference>
<reference key="13">
    <citation type="journal article" date="2015" name="Blood">
        <title>Identification of a new dysfunctional platelet P2Y12 receptor variant associated with bleeding diathesis.</title>
        <authorList>
            <person name="Lecchi A."/>
            <person name="Razzari C."/>
            <person name="Paoletta S."/>
            <person name="Dupuis A."/>
            <person name="Nakamura L."/>
            <person name="Ohlmann P."/>
            <person name="Gachet C."/>
            <person name="Jacobson K.A."/>
            <person name="Zieger B."/>
            <person name="Cattaneo M."/>
        </authorList>
    </citation>
    <scope>VARIANT BDPLT8 GLN-187</scope>
</reference>
<proteinExistence type="evidence at protein level"/>
<comment type="function">
    <text evidence="5 6 7 8 9 10">Receptor for ADP and ATP coupled to G-proteins that inhibit the adenylyl cyclase second messenger system. Not activated by UDP and UTP. Required for normal platelet aggregation and blood coagulation.</text>
</comment>
<comment type="subcellular location">
    <subcellularLocation>
        <location evidence="6 8 9 10">Cell membrane</location>
        <topology evidence="6 8 9 10">Multi-pass membrane protein</topology>
    </subcellularLocation>
</comment>
<comment type="tissue specificity">
    <text evidence="5 6 7">Highly expressed in the platelets, lower levels in the brain. Lowest levels in the lung, appendix, pituitary and adrenal gland. Expressed in the spinal cord and in the fetal brain.</text>
</comment>
<comment type="domain">
    <text evidence="9 10">The transmembrane domain is composed of seven transmembrane helices; most of these are not strictly perpendicular to the plane of the membrane, but are tilted and/or kinked. Agonist binding promotes a conformation change in the extracellular loops that leads to an inward movement of the transmembrane helices. Antagonists such as AZD1283 can bind to an overlapping site, but block the inward movement of the transmembrane helices (PubMed:24670650, PubMed:24784220).</text>
</comment>
<comment type="disease" evidence="6 8 11">
    <disease id="DI-02867">
        <name>Bleeding disorder, platelet-type, 8</name>
        <acronym>BDPLT8</acronym>
        <description>A condition characterized by mild to moderate mucocutaneous bleeding, and excessive bleeding after surgery or trauma. The defect is due to severe impairment of platelet response to ADP resulting in defective platelet aggregation.</description>
        <dbReference type="MIM" id="609821"/>
    </disease>
    <text>The disease is caused by variants affecting the gene represented in this entry.</text>
</comment>
<comment type="similarity">
    <text evidence="3">Belongs to the G-protein coupled receptor 1 family.</text>
</comment>
<gene>
    <name type="primary">P2RY12</name>
    <name type="synonym">HORK3</name>
</gene>